<comment type="function">
    <text evidence="1">Attaches a formyl group to the free amino group of methionyl-tRNA(fMet). The formyl group appears to play a dual role in the initiator identity of N-formylmethionyl-tRNA by promoting its recognition by IF2 and preventing the misappropriation of this tRNA by the elongation apparatus.</text>
</comment>
<comment type="catalytic activity">
    <reaction evidence="1">
        <text>L-methionyl-tRNA(fMet) + (6R)-10-formyltetrahydrofolate = N-formyl-L-methionyl-tRNA(fMet) + (6S)-5,6,7,8-tetrahydrofolate + H(+)</text>
        <dbReference type="Rhea" id="RHEA:24380"/>
        <dbReference type="Rhea" id="RHEA-COMP:9952"/>
        <dbReference type="Rhea" id="RHEA-COMP:9953"/>
        <dbReference type="ChEBI" id="CHEBI:15378"/>
        <dbReference type="ChEBI" id="CHEBI:57453"/>
        <dbReference type="ChEBI" id="CHEBI:78530"/>
        <dbReference type="ChEBI" id="CHEBI:78844"/>
        <dbReference type="ChEBI" id="CHEBI:195366"/>
        <dbReference type="EC" id="2.1.2.9"/>
    </reaction>
</comment>
<comment type="similarity">
    <text evidence="1">Belongs to the Fmt family.</text>
</comment>
<accession>B1HQE4</accession>
<evidence type="ECO:0000255" key="1">
    <source>
        <dbReference type="HAMAP-Rule" id="MF_00182"/>
    </source>
</evidence>
<name>FMT_LYSSC</name>
<reference key="1">
    <citation type="journal article" date="2008" name="J. Bacteriol.">
        <title>Complete genome sequence of the mosquitocidal bacterium Bacillus sphaericus C3-41 and comparison with those of closely related Bacillus species.</title>
        <authorList>
            <person name="Hu X."/>
            <person name="Fan W."/>
            <person name="Han B."/>
            <person name="Liu H."/>
            <person name="Zheng D."/>
            <person name="Li Q."/>
            <person name="Dong W."/>
            <person name="Yan J."/>
            <person name="Gao M."/>
            <person name="Berry C."/>
            <person name="Yuan Z."/>
        </authorList>
    </citation>
    <scope>NUCLEOTIDE SEQUENCE [LARGE SCALE GENOMIC DNA]</scope>
    <source>
        <strain>C3-41</strain>
    </source>
</reference>
<proteinExistence type="inferred from homology"/>
<dbReference type="EC" id="2.1.2.9" evidence="1"/>
<dbReference type="EMBL" id="CP000817">
    <property type="protein sequence ID" value="ACA39091.1"/>
    <property type="molecule type" value="Genomic_DNA"/>
</dbReference>
<dbReference type="RefSeq" id="WP_012293208.1">
    <property type="nucleotide sequence ID" value="NC_010382.1"/>
</dbReference>
<dbReference type="SMR" id="B1HQE4"/>
<dbReference type="EnsemblBacteria" id="ACA39091">
    <property type="protein sequence ID" value="ACA39091"/>
    <property type="gene ID" value="Bsph_1489"/>
</dbReference>
<dbReference type="KEGG" id="lsp:Bsph_1489"/>
<dbReference type="HOGENOM" id="CLU_033347_1_1_9"/>
<dbReference type="Proteomes" id="UP000002164">
    <property type="component" value="Chromosome"/>
</dbReference>
<dbReference type="GO" id="GO:0005829">
    <property type="term" value="C:cytosol"/>
    <property type="evidence" value="ECO:0007669"/>
    <property type="project" value="TreeGrafter"/>
</dbReference>
<dbReference type="GO" id="GO:0004479">
    <property type="term" value="F:methionyl-tRNA formyltransferase activity"/>
    <property type="evidence" value="ECO:0007669"/>
    <property type="project" value="UniProtKB-UniRule"/>
</dbReference>
<dbReference type="CDD" id="cd08646">
    <property type="entry name" value="FMT_core_Met-tRNA-FMT_N"/>
    <property type="match status" value="1"/>
</dbReference>
<dbReference type="CDD" id="cd08704">
    <property type="entry name" value="Met_tRNA_FMT_C"/>
    <property type="match status" value="1"/>
</dbReference>
<dbReference type="FunFam" id="3.40.50.170:FF:000004">
    <property type="entry name" value="Methionyl-tRNA formyltransferase"/>
    <property type="match status" value="1"/>
</dbReference>
<dbReference type="Gene3D" id="3.10.25.10">
    <property type="entry name" value="Formyl transferase, C-terminal domain"/>
    <property type="match status" value="1"/>
</dbReference>
<dbReference type="Gene3D" id="3.40.50.170">
    <property type="entry name" value="Formyl transferase, N-terminal domain"/>
    <property type="match status" value="1"/>
</dbReference>
<dbReference type="HAMAP" id="MF_00182">
    <property type="entry name" value="Formyl_trans"/>
    <property type="match status" value="1"/>
</dbReference>
<dbReference type="InterPro" id="IPR005794">
    <property type="entry name" value="Fmt"/>
</dbReference>
<dbReference type="InterPro" id="IPR005793">
    <property type="entry name" value="Formyl_trans_C"/>
</dbReference>
<dbReference type="InterPro" id="IPR037022">
    <property type="entry name" value="Formyl_trans_C_sf"/>
</dbReference>
<dbReference type="InterPro" id="IPR002376">
    <property type="entry name" value="Formyl_transf_N"/>
</dbReference>
<dbReference type="InterPro" id="IPR036477">
    <property type="entry name" value="Formyl_transf_N_sf"/>
</dbReference>
<dbReference type="InterPro" id="IPR011034">
    <property type="entry name" value="Formyl_transferase-like_C_sf"/>
</dbReference>
<dbReference type="InterPro" id="IPR001555">
    <property type="entry name" value="GART_AS"/>
</dbReference>
<dbReference type="InterPro" id="IPR044135">
    <property type="entry name" value="Met-tRNA-FMT_C"/>
</dbReference>
<dbReference type="InterPro" id="IPR041711">
    <property type="entry name" value="Met-tRNA-FMT_N"/>
</dbReference>
<dbReference type="NCBIfam" id="TIGR00460">
    <property type="entry name" value="fmt"/>
    <property type="match status" value="1"/>
</dbReference>
<dbReference type="PANTHER" id="PTHR11138">
    <property type="entry name" value="METHIONYL-TRNA FORMYLTRANSFERASE"/>
    <property type="match status" value="1"/>
</dbReference>
<dbReference type="PANTHER" id="PTHR11138:SF5">
    <property type="entry name" value="METHIONYL-TRNA FORMYLTRANSFERASE, MITOCHONDRIAL"/>
    <property type="match status" value="1"/>
</dbReference>
<dbReference type="Pfam" id="PF02911">
    <property type="entry name" value="Formyl_trans_C"/>
    <property type="match status" value="1"/>
</dbReference>
<dbReference type="Pfam" id="PF00551">
    <property type="entry name" value="Formyl_trans_N"/>
    <property type="match status" value="1"/>
</dbReference>
<dbReference type="SUPFAM" id="SSF50486">
    <property type="entry name" value="FMT C-terminal domain-like"/>
    <property type="match status" value="1"/>
</dbReference>
<dbReference type="SUPFAM" id="SSF53328">
    <property type="entry name" value="Formyltransferase"/>
    <property type="match status" value="1"/>
</dbReference>
<dbReference type="PROSITE" id="PS00373">
    <property type="entry name" value="GART"/>
    <property type="match status" value="1"/>
</dbReference>
<feature type="chain" id="PRO_1000098415" description="Methionyl-tRNA formyltransferase">
    <location>
        <begin position="1"/>
        <end position="313"/>
    </location>
</feature>
<feature type="binding site" evidence="1">
    <location>
        <begin position="110"/>
        <end position="113"/>
    </location>
    <ligand>
        <name>(6S)-5,6,7,8-tetrahydrofolate</name>
        <dbReference type="ChEBI" id="CHEBI:57453"/>
    </ligand>
</feature>
<gene>
    <name evidence="1" type="primary">fmt</name>
    <name type="ordered locus">Bsph_1489</name>
</gene>
<protein>
    <recommendedName>
        <fullName evidence="1">Methionyl-tRNA formyltransferase</fullName>
        <ecNumber evidence="1">2.1.2.9</ecNumber>
    </recommendedName>
</protein>
<organism>
    <name type="scientific">Lysinibacillus sphaericus (strain C3-41)</name>
    <dbReference type="NCBI Taxonomy" id="444177"/>
    <lineage>
        <taxon>Bacteria</taxon>
        <taxon>Bacillati</taxon>
        <taxon>Bacillota</taxon>
        <taxon>Bacilli</taxon>
        <taxon>Bacillales</taxon>
        <taxon>Bacillaceae</taxon>
        <taxon>Lysinibacillus</taxon>
    </lineage>
</organism>
<keyword id="KW-0648">Protein biosynthesis</keyword>
<keyword id="KW-0808">Transferase</keyword>
<sequence>MTSIIFMGTPDFSAPILRMLHEEGYDIKAVVTQPDRPVGRKRILTPPPVKAAALELGLPIIQPEKLRGSEELQQILSLQPDIVITAAFGQILPKELLDAPSLGCINVHASLLPKYRGGAPIHQAIIDGEKETGVTIMYMAEKLDAGDIISQRAIPIELDDHTGRVFDKLSMVGRDLLKDTLPSIINRTNNRTVQDETQVTFASNISREQERIDWTNDATTLYNQVRGLHPWPVAYTTFEDGNFKVWWATIGKSKHDTIPGTVVAIAKDHFEVAAGNGTTLALYDVQPAGKKRMTAEEYLRGTGSKLQIGDQFK</sequence>